<sequence>DPGFSSWG</sequence>
<feature type="peptide" id="PRO_0000043447" description="Leucokinin-2">
    <location>
        <begin position="1"/>
        <end position="8"/>
    </location>
</feature>
<feature type="modified residue" description="Glycine amide" evidence="1">
    <location>
        <position position="8"/>
    </location>
</feature>
<name>LCK2_RHYMA</name>
<comment type="function">
    <text>This cephalomyotropic peptide stimulates contractile activity of cockroach protodeum (hindgut).</text>
</comment>
<comment type="subcellular location">
    <subcellularLocation>
        <location>Secreted</location>
    </subcellularLocation>
</comment>
<keyword id="KW-0027">Amidation</keyword>
<keyword id="KW-0903">Direct protein sequencing</keyword>
<keyword id="KW-0527">Neuropeptide</keyword>
<keyword id="KW-0964">Secreted</keyword>
<proteinExistence type="evidence at protein level"/>
<accession>P21141</accession>
<protein>
    <recommendedName>
        <fullName>Leucokinin-2</fullName>
    </recommendedName>
    <alternativeName>
        <fullName>Leucokinin II</fullName>
        <shortName>L-II</shortName>
    </alternativeName>
</protein>
<reference key="1">
    <citation type="journal article" date="1986" name="Comp. Biochem. Physiol.">
        <title>Isolation, primary structure and synthesis of two neuropeptides from Leucophaea maderae: members of a new family of Cephalomyotropins.</title>
        <authorList>
            <person name="Holman G.M."/>
            <person name="Cook B.J."/>
            <person name="Nachman R.J."/>
        </authorList>
    </citation>
    <scope>PROTEIN SEQUENCE</scope>
    <scope>AMIDATION AT GLY-8</scope>
    <scope>SYNTHESIS</scope>
    <source>
        <tissue>Head</tissue>
    </source>
</reference>
<dbReference type="GO" id="GO:0005576">
    <property type="term" value="C:extracellular region"/>
    <property type="evidence" value="ECO:0007669"/>
    <property type="project" value="UniProtKB-SubCell"/>
</dbReference>
<dbReference type="GO" id="GO:0007218">
    <property type="term" value="P:neuropeptide signaling pathway"/>
    <property type="evidence" value="ECO:0007669"/>
    <property type="project" value="UniProtKB-KW"/>
</dbReference>
<organism>
    <name type="scientific">Rhyparobia maderae</name>
    <name type="common">Madeira cockroach</name>
    <name type="synonym">Leucophaea maderae</name>
    <dbReference type="NCBI Taxonomy" id="36963"/>
    <lineage>
        <taxon>Eukaryota</taxon>
        <taxon>Metazoa</taxon>
        <taxon>Ecdysozoa</taxon>
        <taxon>Arthropoda</taxon>
        <taxon>Hexapoda</taxon>
        <taxon>Insecta</taxon>
        <taxon>Pterygota</taxon>
        <taxon>Neoptera</taxon>
        <taxon>Polyneoptera</taxon>
        <taxon>Dictyoptera</taxon>
        <taxon>Blattodea</taxon>
        <taxon>Blaberoidea</taxon>
        <taxon>Blaberidae</taxon>
        <taxon>Oxyhaloinae</taxon>
        <taxon>Rhyparobia</taxon>
    </lineage>
</organism>
<evidence type="ECO:0000269" key="1">
    <source ref="1"/>
</evidence>